<comment type="function">
    <text evidence="1">One of the primary rRNA binding proteins, it binds directly to 16S rRNA where it nucleates assembly of the head domain of the 30S subunit. Is located at the subunit interface close to the decoding center, probably blocks exit of the E-site tRNA.</text>
</comment>
<comment type="subunit">
    <text evidence="1">Part of the 30S ribosomal subunit. Contacts proteins S9 and S11.</text>
</comment>
<comment type="similarity">
    <text evidence="1">Belongs to the universal ribosomal protein uS7 family.</text>
</comment>
<gene>
    <name evidence="1" type="primary">rpsG</name>
    <name type="ordered locus">BHWA1_02120</name>
</gene>
<evidence type="ECO:0000255" key="1">
    <source>
        <dbReference type="HAMAP-Rule" id="MF_00480"/>
    </source>
</evidence>
<evidence type="ECO:0000305" key="2"/>
<keyword id="KW-0687">Ribonucleoprotein</keyword>
<keyword id="KW-0689">Ribosomal protein</keyword>
<keyword id="KW-0694">RNA-binding</keyword>
<keyword id="KW-0699">rRNA-binding</keyword>
<keyword id="KW-0820">tRNA-binding</keyword>
<protein>
    <recommendedName>
        <fullName evidence="1">Small ribosomal subunit protein uS7</fullName>
    </recommendedName>
    <alternativeName>
        <fullName evidence="2">30S ribosomal protein S7</fullName>
    </alternativeName>
</protein>
<name>RS7_BRAHW</name>
<accession>C0QVZ2</accession>
<feature type="chain" id="PRO_1000135583" description="Small ribosomal subunit protein uS7">
    <location>
        <begin position="1"/>
        <end position="156"/>
    </location>
</feature>
<proteinExistence type="inferred from homology"/>
<reference key="1">
    <citation type="journal article" date="2009" name="PLoS ONE">
        <title>Genome sequence of the pathogenic intestinal spirochete Brachyspira hyodysenteriae reveals adaptations to its lifestyle in the porcine large intestine.</title>
        <authorList>
            <person name="Bellgard M.I."/>
            <person name="Wanchanthuek P."/>
            <person name="La T."/>
            <person name="Ryan K."/>
            <person name="Moolhuijzen P."/>
            <person name="Albertyn Z."/>
            <person name="Shaban B."/>
            <person name="Motro Y."/>
            <person name="Dunn D.S."/>
            <person name="Schibeci D."/>
            <person name="Hunter A."/>
            <person name="Barrero R."/>
            <person name="Phillips N.D."/>
            <person name="Hampson D.J."/>
        </authorList>
    </citation>
    <scope>NUCLEOTIDE SEQUENCE [LARGE SCALE GENOMIC DNA]</scope>
    <source>
        <strain>ATCC 49526 / WA1</strain>
    </source>
</reference>
<sequence length="156" mass="17772">MARRRRAQTRKIDADPVYGSVVISKFINKLMYDGKKSKAENIFYKAMDLVKEKTGKDGLEAFNEAIENIKPRVEVKSRRVGGSTYQVPVDVRPDRQNSLAFTWLIDASRKRGGRSMIERLSNEIVDAIDGKGQAVAKRDTVHRMAEGNKAFAHFRW</sequence>
<dbReference type="EMBL" id="CP001357">
    <property type="protein sequence ID" value="ACN84578.1"/>
    <property type="molecule type" value="Genomic_DNA"/>
</dbReference>
<dbReference type="RefSeq" id="WP_012671616.1">
    <property type="nucleotide sequence ID" value="NC_012225.1"/>
</dbReference>
<dbReference type="SMR" id="C0QVZ2"/>
<dbReference type="STRING" id="565034.BHWA1_02120"/>
<dbReference type="GeneID" id="63963272"/>
<dbReference type="KEGG" id="bhy:BHWA1_02120"/>
<dbReference type="eggNOG" id="COG0049">
    <property type="taxonomic scope" value="Bacteria"/>
</dbReference>
<dbReference type="HOGENOM" id="CLU_072226_1_1_12"/>
<dbReference type="Proteomes" id="UP000001803">
    <property type="component" value="Chromosome"/>
</dbReference>
<dbReference type="GO" id="GO:0015935">
    <property type="term" value="C:small ribosomal subunit"/>
    <property type="evidence" value="ECO:0007669"/>
    <property type="project" value="InterPro"/>
</dbReference>
<dbReference type="GO" id="GO:0019843">
    <property type="term" value="F:rRNA binding"/>
    <property type="evidence" value="ECO:0007669"/>
    <property type="project" value="UniProtKB-UniRule"/>
</dbReference>
<dbReference type="GO" id="GO:0003735">
    <property type="term" value="F:structural constituent of ribosome"/>
    <property type="evidence" value="ECO:0007669"/>
    <property type="project" value="InterPro"/>
</dbReference>
<dbReference type="GO" id="GO:0000049">
    <property type="term" value="F:tRNA binding"/>
    <property type="evidence" value="ECO:0007669"/>
    <property type="project" value="UniProtKB-UniRule"/>
</dbReference>
<dbReference type="GO" id="GO:0006412">
    <property type="term" value="P:translation"/>
    <property type="evidence" value="ECO:0007669"/>
    <property type="project" value="UniProtKB-UniRule"/>
</dbReference>
<dbReference type="CDD" id="cd14869">
    <property type="entry name" value="uS7_Bacteria"/>
    <property type="match status" value="1"/>
</dbReference>
<dbReference type="FunFam" id="1.10.455.10:FF:000001">
    <property type="entry name" value="30S ribosomal protein S7"/>
    <property type="match status" value="1"/>
</dbReference>
<dbReference type="Gene3D" id="1.10.455.10">
    <property type="entry name" value="Ribosomal protein S7 domain"/>
    <property type="match status" value="1"/>
</dbReference>
<dbReference type="HAMAP" id="MF_00480_B">
    <property type="entry name" value="Ribosomal_uS7_B"/>
    <property type="match status" value="1"/>
</dbReference>
<dbReference type="InterPro" id="IPR000235">
    <property type="entry name" value="Ribosomal_uS7"/>
</dbReference>
<dbReference type="InterPro" id="IPR005717">
    <property type="entry name" value="Ribosomal_uS7_bac/org-type"/>
</dbReference>
<dbReference type="InterPro" id="IPR020606">
    <property type="entry name" value="Ribosomal_uS7_CS"/>
</dbReference>
<dbReference type="InterPro" id="IPR023798">
    <property type="entry name" value="Ribosomal_uS7_dom"/>
</dbReference>
<dbReference type="InterPro" id="IPR036823">
    <property type="entry name" value="Ribosomal_uS7_dom_sf"/>
</dbReference>
<dbReference type="NCBIfam" id="TIGR01029">
    <property type="entry name" value="rpsG_bact"/>
    <property type="match status" value="1"/>
</dbReference>
<dbReference type="PANTHER" id="PTHR11205">
    <property type="entry name" value="RIBOSOMAL PROTEIN S7"/>
    <property type="match status" value="1"/>
</dbReference>
<dbReference type="Pfam" id="PF00177">
    <property type="entry name" value="Ribosomal_S7"/>
    <property type="match status" value="1"/>
</dbReference>
<dbReference type="PIRSF" id="PIRSF002122">
    <property type="entry name" value="RPS7p_RPS7a_RPS5e_RPS7o"/>
    <property type="match status" value="1"/>
</dbReference>
<dbReference type="SUPFAM" id="SSF47973">
    <property type="entry name" value="Ribosomal protein S7"/>
    <property type="match status" value="1"/>
</dbReference>
<dbReference type="PROSITE" id="PS00052">
    <property type="entry name" value="RIBOSOMAL_S7"/>
    <property type="match status" value="1"/>
</dbReference>
<organism>
    <name type="scientific">Brachyspira hyodysenteriae (strain ATCC 49526 / WA1)</name>
    <dbReference type="NCBI Taxonomy" id="565034"/>
    <lineage>
        <taxon>Bacteria</taxon>
        <taxon>Pseudomonadati</taxon>
        <taxon>Spirochaetota</taxon>
        <taxon>Spirochaetia</taxon>
        <taxon>Brachyspirales</taxon>
        <taxon>Brachyspiraceae</taxon>
        <taxon>Brachyspira</taxon>
    </lineage>
</organism>